<comment type="function">
    <text evidence="2 3 5">Copper-binding protein involved in copper resistance.</text>
</comment>
<comment type="subunit">
    <text evidence="2">Monomer-dimer equilibrium in solution for the apo protein (PubMed:12459914). Dimerization is significantly enhanced upon binding of copper(I) (PubMed:12459914).</text>
</comment>
<comment type="subcellular location">
    <subcellularLocation>
        <location evidence="1">Periplasm</location>
    </subcellularLocation>
</comment>
<comment type="domain">
    <text evidence="3">Contains two copper binding sites, separated by 30 angstroms, which can be occupied either one at a time or simultaneously (PubMed:17477524). One is specific for Cu(I), while the other is specific for Cu(II) (PubMed:17477524).</text>
</comment>
<comment type="mass spectrometry" mass="10979.0" method="Electrospray" evidence="3"/>
<comment type="miscellaneous">
    <text evidence="9 10">Significant differences in the properties of PcoC and P.syringae CopC were initially reported. The differences were attributed to the presence of an additional N-terminal alanine residue in the initially expressed PcoC protein.</text>
</comment>
<comment type="similarity">
    <text evidence="8">Belongs to the CopC family.</text>
</comment>
<evidence type="ECO:0000250" key="1">
    <source>
        <dbReference type="UniProtKB" id="P12376"/>
    </source>
</evidence>
<evidence type="ECO:0000269" key="2">
    <source>
    </source>
</evidence>
<evidence type="ECO:0000269" key="3">
    <source>
    </source>
</evidence>
<evidence type="ECO:0000269" key="4">
    <source>
    </source>
</evidence>
<evidence type="ECO:0000269" key="5">
    <source>
    </source>
</evidence>
<evidence type="ECO:0000303" key="6">
    <source>
    </source>
</evidence>
<evidence type="ECO:0000303" key="7">
    <source>
    </source>
</evidence>
<evidence type="ECO:0000305" key="8"/>
<evidence type="ECO:0000305" key="9">
    <source>
    </source>
</evidence>
<evidence type="ECO:0000305" key="10">
    <source>
    </source>
</evidence>
<evidence type="ECO:0007744" key="11">
    <source>
        <dbReference type="PDB" id="1IX2"/>
    </source>
</evidence>
<evidence type="ECO:0007744" key="12">
    <source>
        <dbReference type="PDB" id="1LYQ"/>
    </source>
</evidence>
<evidence type="ECO:0007829" key="13">
    <source>
        <dbReference type="PDB" id="1IX2"/>
    </source>
</evidence>
<evidence type="ECO:0007829" key="14">
    <source>
        <dbReference type="PDB" id="1LYQ"/>
    </source>
</evidence>
<keyword id="KW-0002">3D-structure</keyword>
<keyword id="KW-0186">Copper</keyword>
<keyword id="KW-0479">Metal-binding</keyword>
<keyword id="KW-0574">Periplasm</keyword>
<keyword id="KW-0614">Plasmid</keyword>
<keyword id="KW-0732">Signal</keyword>
<gene>
    <name evidence="7" type="primary">pcoC</name>
</gene>
<proteinExistence type="evidence at protein level"/>
<organism>
    <name type="scientific">Escherichia coli</name>
    <dbReference type="NCBI Taxonomy" id="562"/>
    <lineage>
        <taxon>Bacteria</taxon>
        <taxon>Pseudomonadati</taxon>
        <taxon>Pseudomonadota</taxon>
        <taxon>Gammaproteobacteria</taxon>
        <taxon>Enterobacterales</taxon>
        <taxon>Enterobacteriaceae</taxon>
        <taxon>Escherichia</taxon>
    </lineage>
</organism>
<reference key="1">
    <citation type="journal article" date="1995" name="Mol. Microbiol.">
        <title>Molecular genetics and transport analysis of the copper-resistance determinant (pco) from Escherichia coli plasmid pRJ1004.</title>
        <authorList>
            <person name="Brown N.L."/>
            <person name="Barrett S.R."/>
            <person name="Camakaris J."/>
            <person name="Lee B.T.O."/>
            <person name="Rouch D.A."/>
        </authorList>
    </citation>
    <scope>NUCLEOTIDE SEQUENCE [GENOMIC DNA]</scope>
    <scope>FUNCTION</scope>
</reference>
<reference key="2">
    <citation type="journal article" date="2007" name="Inorg. Chem.">
        <title>Conserved mechanism of copper binding and transfer. A comparison of the copper-resistance proteins PcoC from Escherichia coli and CopC from Pseudomonas syringae.</title>
        <authorList>
            <person name="Djoko K.Y."/>
            <person name="Xiao Z."/>
            <person name="Huffman D.L."/>
            <person name="Wedd A.G."/>
        </authorList>
    </citation>
    <scope>FUNCTION</scope>
    <scope>COPPER-BINDING</scope>
    <scope>DOMAIN</scope>
    <scope>MASS SPECTROMETRY</scope>
    <scope>MUTAGENESIS OF HIS-24; MET-63; HIS-72 AND HIS-115</scope>
</reference>
<reference key="3">
    <citation type="journal article" date="2008" name="J. Biol. Inorg. Chem.">
        <title>Electron paramagnetic resonance characterization of the copper-resistance protein PcoC from Escherichia coli.</title>
        <authorList>
            <person name="Drew S.C."/>
            <person name="Djoko K.Y."/>
            <person name="Zhang L."/>
            <person name="Koay M."/>
            <person name="Boas J.F."/>
            <person name="Pilbrow J.R."/>
            <person name="Xiao Z."/>
            <person name="Barnham K.J."/>
            <person name="Wedd A.G."/>
        </authorList>
    </citation>
    <scope>COPPER-BINDING</scope>
    <scope>ELECTRON PARAMAGNETIC RESONANCE</scope>
</reference>
<reference evidence="11 12" key="4">
    <citation type="journal article" date="2003" name="J. Biol. Inorg. Chem.">
        <title>Crystal structure and dimerization equilibria of PcoC, a methionine-rich copper resistance protein from Escherichia coli.</title>
        <authorList>
            <person name="Wernimont A.K."/>
            <person name="Huffman D.L."/>
            <person name="Finney L.A."/>
            <person name="Demeler B."/>
            <person name="O'Halloran T.V."/>
            <person name="Rosenzweig A.C."/>
        </authorList>
    </citation>
    <scope>X-RAY CRYSTALLOGRAPHY (1.50 ANGSTROMS) OF 23-126</scope>
    <scope>FUNCTION</scope>
    <scope>SUBUNIT</scope>
</reference>
<protein>
    <recommendedName>
        <fullName evidence="6">Copper resistance protein C</fullName>
    </recommendedName>
</protein>
<sequence length="126" mass="13256">MSILNKAILTGGLVMGVAFSAMAHPELKSSVPQADSAVAAPEKIQLNFSENLTVKFSGAKLTMTGMKGMSSHSPMPVAAKVAPGADPKSMVIIPREPLPAGTYRVDWRAVSSDTHPITGNYTFTVK</sequence>
<dbReference type="EMBL" id="X83541">
    <property type="protein sequence ID" value="CAA58527.1"/>
    <property type="molecule type" value="Genomic_DNA"/>
</dbReference>
<dbReference type="PIR" id="S70161">
    <property type="entry name" value="S52255"/>
</dbReference>
<dbReference type="RefSeq" id="WP_000025662.1">
    <property type="nucleotide sequence ID" value="NZ_WVVM01000015.1"/>
</dbReference>
<dbReference type="PDB" id="1IX2">
    <property type="method" value="X-ray"/>
    <property type="resolution" value="1.55 A"/>
    <property type="chains" value="A/B=23-126"/>
</dbReference>
<dbReference type="PDB" id="1LYQ">
    <property type="method" value="X-ray"/>
    <property type="resolution" value="1.50 A"/>
    <property type="chains" value="A/B=23-126"/>
</dbReference>
<dbReference type="PDBsum" id="1IX2"/>
<dbReference type="PDBsum" id="1LYQ"/>
<dbReference type="SMR" id="Q47454"/>
<dbReference type="DIP" id="DIP-16994N"/>
<dbReference type="GeneID" id="93248122"/>
<dbReference type="eggNOG" id="COG2372">
    <property type="taxonomic scope" value="Bacteria"/>
</dbReference>
<dbReference type="OMA" id="ADHAPMK"/>
<dbReference type="EvolutionaryTrace" id="Q47454"/>
<dbReference type="GO" id="GO:0042597">
    <property type="term" value="C:periplasmic space"/>
    <property type="evidence" value="ECO:0007669"/>
    <property type="project" value="UniProtKB-SubCell"/>
</dbReference>
<dbReference type="GO" id="GO:0005886">
    <property type="term" value="C:plasma membrane"/>
    <property type="evidence" value="ECO:0007669"/>
    <property type="project" value="TreeGrafter"/>
</dbReference>
<dbReference type="GO" id="GO:0005507">
    <property type="term" value="F:copper ion binding"/>
    <property type="evidence" value="ECO:0007669"/>
    <property type="project" value="InterPro"/>
</dbReference>
<dbReference type="GO" id="GO:0006825">
    <property type="term" value="P:copper ion transport"/>
    <property type="evidence" value="ECO:0007669"/>
    <property type="project" value="InterPro"/>
</dbReference>
<dbReference type="GO" id="GO:0046688">
    <property type="term" value="P:response to copper ion"/>
    <property type="evidence" value="ECO:0007669"/>
    <property type="project" value="InterPro"/>
</dbReference>
<dbReference type="Gene3D" id="2.60.40.1220">
    <property type="match status" value="1"/>
</dbReference>
<dbReference type="InterPro" id="IPR047685">
    <property type="entry name" value="CopC-like"/>
</dbReference>
<dbReference type="InterPro" id="IPR032694">
    <property type="entry name" value="CopC/D"/>
</dbReference>
<dbReference type="InterPro" id="IPR007348">
    <property type="entry name" value="CopC_dom"/>
</dbReference>
<dbReference type="InterPro" id="IPR014755">
    <property type="entry name" value="Cu-Rt/internalin_Ig-like"/>
</dbReference>
<dbReference type="InterPro" id="IPR014756">
    <property type="entry name" value="Ig_E-set"/>
</dbReference>
<dbReference type="NCBIfam" id="NF033814">
    <property type="entry name" value="copper_CopC"/>
    <property type="match status" value="1"/>
</dbReference>
<dbReference type="PANTHER" id="PTHR34820">
    <property type="entry name" value="INNER MEMBRANE PROTEIN YEBZ"/>
    <property type="match status" value="1"/>
</dbReference>
<dbReference type="PANTHER" id="PTHR34820:SF4">
    <property type="entry name" value="INNER MEMBRANE PROTEIN YEBZ"/>
    <property type="match status" value="1"/>
</dbReference>
<dbReference type="Pfam" id="PF04234">
    <property type="entry name" value="CopC"/>
    <property type="match status" value="1"/>
</dbReference>
<dbReference type="SUPFAM" id="SSF81296">
    <property type="entry name" value="E set domains"/>
    <property type="match status" value="1"/>
</dbReference>
<feature type="signal peptide" evidence="3">
    <location>
        <begin position="1"/>
        <end position="23"/>
    </location>
</feature>
<feature type="chain" id="PRO_0000006026" description="Copper resistance protein C">
    <location>
        <begin position="24"/>
        <end position="126"/>
    </location>
</feature>
<feature type="binding site" evidence="3 4">
    <location>
        <position position="24"/>
    </location>
    <ligand>
        <name>Cu(2+)</name>
        <dbReference type="ChEBI" id="CHEBI:29036"/>
    </ligand>
</feature>
<feature type="binding site" evidence="1">
    <location>
        <position position="63"/>
    </location>
    <ligand>
        <name>Cu(+)</name>
        <dbReference type="ChEBI" id="CHEBI:49552"/>
    </ligand>
</feature>
<feature type="binding site" evidence="1">
    <location>
        <position position="66"/>
    </location>
    <ligand>
        <name>Cu(+)</name>
        <dbReference type="ChEBI" id="CHEBI:49552"/>
    </ligand>
</feature>
<feature type="binding site" evidence="1">
    <location>
        <position position="69"/>
    </location>
    <ligand>
        <name>Cu(+)</name>
        <dbReference type="ChEBI" id="CHEBI:49552"/>
    </ligand>
</feature>
<feature type="binding site" evidence="1">
    <location>
        <position position="72"/>
    </location>
    <ligand>
        <name>Cu(+)</name>
        <dbReference type="ChEBI" id="CHEBI:49552"/>
    </ligand>
</feature>
<feature type="binding site" evidence="1">
    <location>
        <position position="75"/>
    </location>
    <ligand>
        <name>Cu(+)</name>
        <dbReference type="ChEBI" id="CHEBI:49552"/>
    </ligand>
</feature>
<feature type="binding site" evidence="3 4">
    <location>
        <position position="115"/>
    </location>
    <ligand>
        <name>Cu(2+)</name>
        <dbReference type="ChEBI" id="CHEBI:29036"/>
    </ligand>
</feature>
<feature type="mutagenesis site" description="Decreases affinity for copper(II)." evidence="3">
    <original>H</original>
    <variation>F</variation>
    <location>
        <position position="24"/>
    </location>
</feature>
<feature type="mutagenesis site" description="Decreases affinity for copper(I)." evidence="3">
    <original>M</original>
    <variation>L</variation>
    <location>
        <position position="63"/>
    </location>
</feature>
<feature type="mutagenesis site" description="Decreases affinity for copper(I)." evidence="3">
    <original>H</original>
    <variation>F</variation>
    <location>
        <position position="72"/>
    </location>
</feature>
<feature type="mutagenesis site" description="Decreases affinity for copper(II)." evidence="3">
    <original>H</original>
    <variation>F</variation>
    <location>
        <position position="115"/>
    </location>
</feature>
<feature type="strand" evidence="14">
    <location>
        <begin position="27"/>
        <end position="32"/>
    </location>
</feature>
<feature type="strand" evidence="14">
    <location>
        <begin position="37"/>
        <end position="39"/>
    </location>
</feature>
<feature type="strand" evidence="14">
    <location>
        <begin position="44"/>
        <end position="50"/>
    </location>
</feature>
<feature type="helix" evidence="14">
    <location>
        <begin position="54"/>
        <end position="56"/>
    </location>
</feature>
<feature type="strand" evidence="14">
    <location>
        <begin position="58"/>
        <end position="66"/>
    </location>
</feature>
<feature type="strand" evidence="13">
    <location>
        <begin position="75"/>
        <end position="77"/>
    </location>
</feature>
<feature type="strand" evidence="14">
    <location>
        <begin position="79"/>
        <end position="83"/>
    </location>
</feature>
<feature type="strand" evidence="14">
    <location>
        <begin position="89"/>
        <end position="96"/>
    </location>
</feature>
<feature type="strand" evidence="14">
    <location>
        <begin position="100"/>
        <end position="109"/>
    </location>
</feature>
<feature type="strand" evidence="14">
    <location>
        <begin position="117"/>
        <end position="125"/>
    </location>
</feature>
<name>PCOC_ECOLX</name>
<geneLocation type="plasmid">
    <name>pRJ1004</name>
</geneLocation>
<accession>Q47454</accession>